<feature type="chain" id="PRO_0000092151" description="Energy-coupling factor transporter ATP-binding protein EcfA">
    <location>
        <begin position="1"/>
        <end position="278"/>
    </location>
</feature>
<feature type="domain" description="ABC transporter" evidence="1">
    <location>
        <begin position="4"/>
        <end position="239"/>
    </location>
</feature>
<feature type="binding site" evidence="1">
    <location>
        <begin position="37"/>
        <end position="44"/>
    </location>
    <ligand>
        <name>ATP</name>
        <dbReference type="ChEBI" id="CHEBI:30616"/>
    </ligand>
</feature>
<sequence length="278" mass="30567">MAILETRDLKYSYPDGTVALNGINFKAEKGEMIAILGPNGAGKSTTFLHFNGILKPSNGSVILKGEAIKYDNKSLLNVRKTVGIVFQNPDDQLFAPTVEQDVAFGPMNLGLSKEEIEKRVKDSLKAVSMEGFERKPPHHLSGGQKKRIAIAGILAMNPEIIVLDEPTSGLDPMGASQIMKLLYELNRQGITIIISTHDVDLVPIYANKVYLLNEGKIIKGGTPREIFSDSETVRSANLRLPRVAHLIELLDKEDKLGIKMGYTIGEARNNIKEFIKGE</sequence>
<dbReference type="EC" id="7.-.-.-" evidence="1"/>
<dbReference type="EMBL" id="BX950229">
    <property type="protein sequence ID" value="CAF31040.1"/>
    <property type="molecule type" value="Genomic_DNA"/>
</dbReference>
<dbReference type="RefSeq" id="WP_011171428.1">
    <property type="nucleotide sequence ID" value="NC_005791.1"/>
</dbReference>
<dbReference type="SMR" id="Q6LX68"/>
<dbReference type="STRING" id="267377.MMP1484"/>
<dbReference type="EnsemblBacteria" id="CAF31040">
    <property type="protein sequence ID" value="CAF31040"/>
    <property type="gene ID" value="MMP1484"/>
</dbReference>
<dbReference type="GeneID" id="2761154"/>
<dbReference type="KEGG" id="mmp:MMP1484"/>
<dbReference type="PATRIC" id="fig|267377.15.peg.1520"/>
<dbReference type="eggNOG" id="arCOG00202">
    <property type="taxonomic scope" value="Archaea"/>
</dbReference>
<dbReference type="HOGENOM" id="CLU_000604_1_22_2"/>
<dbReference type="OrthoDB" id="18209at2157"/>
<dbReference type="Proteomes" id="UP000000590">
    <property type="component" value="Chromosome"/>
</dbReference>
<dbReference type="GO" id="GO:0043190">
    <property type="term" value="C:ATP-binding cassette (ABC) transporter complex"/>
    <property type="evidence" value="ECO:0007669"/>
    <property type="project" value="TreeGrafter"/>
</dbReference>
<dbReference type="GO" id="GO:0005524">
    <property type="term" value="F:ATP binding"/>
    <property type="evidence" value="ECO:0007669"/>
    <property type="project" value="UniProtKB-KW"/>
</dbReference>
<dbReference type="GO" id="GO:0016887">
    <property type="term" value="F:ATP hydrolysis activity"/>
    <property type="evidence" value="ECO:0007669"/>
    <property type="project" value="InterPro"/>
</dbReference>
<dbReference type="GO" id="GO:0042626">
    <property type="term" value="F:ATPase-coupled transmembrane transporter activity"/>
    <property type="evidence" value="ECO:0007669"/>
    <property type="project" value="TreeGrafter"/>
</dbReference>
<dbReference type="GO" id="GO:0006824">
    <property type="term" value="P:cobalt ion transport"/>
    <property type="evidence" value="ECO:0007669"/>
    <property type="project" value="InterPro"/>
</dbReference>
<dbReference type="CDD" id="cd03225">
    <property type="entry name" value="ABC_cobalt_CbiO_domain1"/>
    <property type="match status" value="1"/>
</dbReference>
<dbReference type="FunFam" id="3.40.50.300:FF:000224">
    <property type="entry name" value="Energy-coupling factor transporter ATP-binding protein EcfA"/>
    <property type="match status" value="1"/>
</dbReference>
<dbReference type="Gene3D" id="3.40.50.300">
    <property type="entry name" value="P-loop containing nucleotide triphosphate hydrolases"/>
    <property type="match status" value="1"/>
</dbReference>
<dbReference type="InterPro" id="IPR003593">
    <property type="entry name" value="AAA+_ATPase"/>
</dbReference>
<dbReference type="InterPro" id="IPR003439">
    <property type="entry name" value="ABC_transporter-like_ATP-bd"/>
</dbReference>
<dbReference type="InterPro" id="IPR017871">
    <property type="entry name" value="ABC_transporter-like_CS"/>
</dbReference>
<dbReference type="InterPro" id="IPR015856">
    <property type="entry name" value="ABC_transpr_CbiO/EcfA_su"/>
</dbReference>
<dbReference type="InterPro" id="IPR005876">
    <property type="entry name" value="Co_trans_ATP-bd"/>
</dbReference>
<dbReference type="InterPro" id="IPR050095">
    <property type="entry name" value="ECF_ABC_transporter_ATP-bd"/>
</dbReference>
<dbReference type="InterPro" id="IPR027417">
    <property type="entry name" value="P-loop_NTPase"/>
</dbReference>
<dbReference type="NCBIfam" id="TIGR01166">
    <property type="entry name" value="cbiO"/>
    <property type="match status" value="1"/>
</dbReference>
<dbReference type="PANTHER" id="PTHR43553:SF24">
    <property type="entry name" value="ENERGY-COUPLING FACTOR TRANSPORTER ATP-BINDING PROTEIN ECFA1"/>
    <property type="match status" value="1"/>
</dbReference>
<dbReference type="PANTHER" id="PTHR43553">
    <property type="entry name" value="HEAVY METAL TRANSPORTER"/>
    <property type="match status" value="1"/>
</dbReference>
<dbReference type="Pfam" id="PF00005">
    <property type="entry name" value="ABC_tran"/>
    <property type="match status" value="1"/>
</dbReference>
<dbReference type="SMART" id="SM00382">
    <property type="entry name" value="AAA"/>
    <property type="match status" value="1"/>
</dbReference>
<dbReference type="SUPFAM" id="SSF52540">
    <property type="entry name" value="P-loop containing nucleoside triphosphate hydrolases"/>
    <property type="match status" value="1"/>
</dbReference>
<dbReference type="PROSITE" id="PS00211">
    <property type="entry name" value="ABC_TRANSPORTER_1"/>
    <property type="match status" value="1"/>
</dbReference>
<dbReference type="PROSITE" id="PS50893">
    <property type="entry name" value="ABC_TRANSPORTER_2"/>
    <property type="match status" value="1"/>
</dbReference>
<dbReference type="PROSITE" id="PS51246">
    <property type="entry name" value="CBIO"/>
    <property type="match status" value="1"/>
</dbReference>
<keyword id="KW-0067">ATP-binding</keyword>
<keyword id="KW-1003">Cell membrane</keyword>
<keyword id="KW-0472">Membrane</keyword>
<keyword id="KW-0547">Nucleotide-binding</keyword>
<keyword id="KW-1185">Reference proteome</keyword>
<keyword id="KW-1278">Translocase</keyword>
<keyword id="KW-0813">Transport</keyword>
<proteinExistence type="inferred from homology"/>
<name>ECFA_METMP</name>
<gene>
    <name evidence="1" type="primary">ecfA</name>
    <name type="synonym">cbiO</name>
    <name type="ordered locus">MMP1484</name>
</gene>
<accession>Q6LX68</accession>
<organism>
    <name type="scientific">Methanococcus maripaludis (strain DSM 14266 / JCM 13030 / NBRC 101832 / S2 / LL)</name>
    <dbReference type="NCBI Taxonomy" id="267377"/>
    <lineage>
        <taxon>Archaea</taxon>
        <taxon>Methanobacteriati</taxon>
        <taxon>Methanobacteriota</taxon>
        <taxon>Methanomada group</taxon>
        <taxon>Methanococci</taxon>
        <taxon>Methanococcales</taxon>
        <taxon>Methanococcaceae</taxon>
        <taxon>Methanococcus</taxon>
    </lineage>
</organism>
<reference key="1">
    <citation type="journal article" date="2004" name="J. Bacteriol.">
        <title>Complete genome sequence of the genetically tractable hydrogenotrophic methanogen Methanococcus maripaludis.</title>
        <authorList>
            <person name="Hendrickson E.L."/>
            <person name="Kaul R."/>
            <person name="Zhou Y."/>
            <person name="Bovee D."/>
            <person name="Chapman P."/>
            <person name="Chung J."/>
            <person name="Conway de Macario E."/>
            <person name="Dodsworth J.A."/>
            <person name="Gillett W."/>
            <person name="Graham D.E."/>
            <person name="Hackett M."/>
            <person name="Haydock A.K."/>
            <person name="Kang A."/>
            <person name="Land M.L."/>
            <person name="Levy R."/>
            <person name="Lie T.J."/>
            <person name="Major T.A."/>
            <person name="Moore B.C."/>
            <person name="Porat I."/>
            <person name="Palmeiri A."/>
            <person name="Rouse G."/>
            <person name="Saenphimmachak C."/>
            <person name="Soell D."/>
            <person name="Van Dien S."/>
            <person name="Wang T."/>
            <person name="Whitman W.B."/>
            <person name="Xia Q."/>
            <person name="Zhang Y."/>
            <person name="Larimer F.W."/>
            <person name="Olson M.V."/>
            <person name="Leigh J.A."/>
        </authorList>
    </citation>
    <scope>NUCLEOTIDE SEQUENCE [LARGE SCALE GENOMIC DNA]</scope>
    <source>
        <strain>DSM 14266 / JCM 13030 / NBRC 101832 / S2 / LL</strain>
    </source>
</reference>
<protein>
    <recommendedName>
        <fullName evidence="1">Energy-coupling factor transporter ATP-binding protein EcfA</fullName>
        <shortName evidence="1">ECF transporter A component EcfA</shortName>
        <ecNumber evidence="1">7.-.-.-</ecNumber>
    </recommendedName>
</protein>
<comment type="function">
    <text evidence="1">ATP-binding (A) component of a common energy-coupling factor (ECF) ABC-transporter complex. Unlike classic ABC transporters this ECF transporter provides the energy necessary to transport a number of different substrates.</text>
</comment>
<comment type="subunit">
    <text evidence="1">Forms a stable energy-coupling factor (ECF) transporter complex composed of 2 membrane-embedded substrate-binding proteins (S component), 2 ATP-binding proteins (A component) and 2 transmembrane proteins (T component).</text>
</comment>
<comment type="subcellular location">
    <subcellularLocation>
        <location evidence="1">Cell membrane</location>
        <topology evidence="1">Peripheral membrane protein</topology>
    </subcellularLocation>
</comment>
<comment type="similarity">
    <text evidence="1">Belongs to the ABC transporter superfamily. Energy-coupling factor EcfA family.</text>
</comment>
<evidence type="ECO:0000255" key="1">
    <source>
        <dbReference type="HAMAP-Rule" id="MF_01710"/>
    </source>
</evidence>